<protein>
    <recommendedName>
        <fullName evidence="1">Holo-[acyl-carrier-protein] synthase</fullName>
        <shortName evidence="1">Holo-ACP synthase</shortName>
        <ecNumber evidence="1">2.7.8.7</ecNumber>
    </recommendedName>
    <alternativeName>
        <fullName evidence="1">4'-phosphopantetheinyl transferase AcpS</fullName>
    </alternativeName>
</protein>
<proteinExistence type="inferred from homology"/>
<reference key="1">
    <citation type="journal article" date="2006" name="Genome Res.">
        <title>Skewed genomic variability in strains of the toxigenic bacterial pathogen, Clostridium perfringens.</title>
        <authorList>
            <person name="Myers G.S.A."/>
            <person name="Rasko D.A."/>
            <person name="Cheung J.K."/>
            <person name="Ravel J."/>
            <person name="Seshadri R."/>
            <person name="DeBoy R.T."/>
            <person name="Ren Q."/>
            <person name="Varga J."/>
            <person name="Awad M.M."/>
            <person name="Brinkac L.M."/>
            <person name="Daugherty S.C."/>
            <person name="Haft D.H."/>
            <person name="Dodson R.J."/>
            <person name="Madupu R."/>
            <person name="Nelson W.C."/>
            <person name="Rosovitz M.J."/>
            <person name="Sullivan S.A."/>
            <person name="Khouri H."/>
            <person name="Dimitrov G.I."/>
            <person name="Watkins K.L."/>
            <person name="Mulligan S."/>
            <person name="Benton J."/>
            <person name="Radune D."/>
            <person name="Fisher D.J."/>
            <person name="Atkins H.S."/>
            <person name="Hiscox T."/>
            <person name="Jost B.H."/>
            <person name="Billington S.J."/>
            <person name="Songer J.G."/>
            <person name="McClane B.A."/>
            <person name="Titball R.W."/>
            <person name="Rood J.I."/>
            <person name="Melville S.B."/>
            <person name="Paulsen I.T."/>
        </authorList>
    </citation>
    <scope>NUCLEOTIDE SEQUENCE [LARGE SCALE GENOMIC DNA]</scope>
    <source>
        <strain>SM101 / Type A</strain>
    </source>
</reference>
<feature type="chain" id="PRO_1000008416" description="Holo-[acyl-carrier-protein] synthase">
    <location>
        <begin position="1"/>
        <end position="133"/>
    </location>
</feature>
<feature type="binding site" evidence="1">
    <location>
        <position position="8"/>
    </location>
    <ligand>
        <name>Mg(2+)</name>
        <dbReference type="ChEBI" id="CHEBI:18420"/>
    </ligand>
</feature>
<feature type="binding site" evidence="1">
    <location>
        <position position="56"/>
    </location>
    <ligand>
        <name>Mg(2+)</name>
        <dbReference type="ChEBI" id="CHEBI:18420"/>
    </ligand>
</feature>
<sequence length="133" mass="14768">MIIGIGVDIIEIGRVRQAIRNNKNFLSKLFTEREIDYFISRNMNSEVIAGNFAAKEAVSKALGTGMRGFSFKDIEILRNELGKPEVILHNGANLIGNKLVENNNSLRVHLSISHNNSSAIAYSVLEGEYYGNI</sequence>
<dbReference type="EC" id="2.7.8.7" evidence="1"/>
<dbReference type="EMBL" id="CP000312">
    <property type="protein sequence ID" value="ABG85846.1"/>
    <property type="molecule type" value="Genomic_DNA"/>
</dbReference>
<dbReference type="RefSeq" id="WP_011591411.1">
    <property type="nucleotide sequence ID" value="NC_008262.1"/>
</dbReference>
<dbReference type="SMR" id="Q0SW89"/>
<dbReference type="KEGG" id="cpr:CPR_0282"/>
<dbReference type="Proteomes" id="UP000001824">
    <property type="component" value="Chromosome"/>
</dbReference>
<dbReference type="GO" id="GO:0005737">
    <property type="term" value="C:cytoplasm"/>
    <property type="evidence" value="ECO:0007669"/>
    <property type="project" value="UniProtKB-SubCell"/>
</dbReference>
<dbReference type="GO" id="GO:0008897">
    <property type="term" value="F:holo-[acyl-carrier-protein] synthase activity"/>
    <property type="evidence" value="ECO:0007669"/>
    <property type="project" value="UniProtKB-UniRule"/>
</dbReference>
<dbReference type="GO" id="GO:0000287">
    <property type="term" value="F:magnesium ion binding"/>
    <property type="evidence" value="ECO:0007669"/>
    <property type="project" value="UniProtKB-UniRule"/>
</dbReference>
<dbReference type="GO" id="GO:0006633">
    <property type="term" value="P:fatty acid biosynthetic process"/>
    <property type="evidence" value="ECO:0007669"/>
    <property type="project" value="UniProtKB-UniRule"/>
</dbReference>
<dbReference type="Gene3D" id="3.90.470.20">
    <property type="entry name" value="4'-phosphopantetheinyl transferase domain"/>
    <property type="match status" value="1"/>
</dbReference>
<dbReference type="HAMAP" id="MF_00101">
    <property type="entry name" value="AcpS"/>
    <property type="match status" value="1"/>
</dbReference>
<dbReference type="InterPro" id="IPR008278">
    <property type="entry name" value="4-PPantetheinyl_Trfase_dom"/>
</dbReference>
<dbReference type="InterPro" id="IPR037143">
    <property type="entry name" value="4-PPantetheinyl_Trfase_dom_sf"/>
</dbReference>
<dbReference type="InterPro" id="IPR002582">
    <property type="entry name" value="ACPS"/>
</dbReference>
<dbReference type="InterPro" id="IPR004568">
    <property type="entry name" value="Ppantetheine-prot_Trfase_dom"/>
</dbReference>
<dbReference type="NCBIfam" id="TIGR00516">
    <property type="entry name" value="acpS"/>
    <property type="match status" value="1"/>
</dbReference>
<dbReference type="NCBIfam" id="TIGR00556">
    <property type="entry name" value="pantethn_trn"/>
    <property type="match status" value="1"/>
</dbReference>
<dbReference type="Pfam" id="PF01648">
    <property type="entry name" value="ACPS"/>
    <property type="match status" value="1"/>
</dbReference>
<dbReference type="SUPFAM" id="SSF56214">
    <property type="entry name" value="4'-phosphopantetheinyl transferase"/>
    <property type="match status" value="1"/>
</dbReference>
<evidence type="ECO:0000255" key="1">
    <source>
        <dbReference type="HAMAP-Rule" id="MF_00101"/>
    </source>
</evidence>
<name>ACPS_CLOPS</name>
<accession>Q0SW89</accession>
<keyword id="KW-0963">Cytoplasm</keyword>
<keyword id="KW-0275">Fatty acid biosynthesis</keyword>
<keyword id="KW-0276">Fatty acid metabolism</keyword>
<keyword id="KW-0444">Lipid biosynthesis</keyword>
<keyword id="KW-0443">Lipid metabolism</keyword>
<keyword id="KW-0460">Magnesium</keyword>
<keyword id="KW-0479">Metal-binding</keyword>
<keyword id="KW-0808">Transferase</keyword>
<comment type="function">
    <text evidence="1">Transfers the 4'-phosphopantetheine moiety from coenzyme A to a Ser of acyl-carrier-protein.</text>
</comment>
<comment type="catalytic activity">
    <reaction evidence="1">
        <text>apo-[ACP] + CoA = holo-[ACP] + adenosine 3',5'-bisphosphate + H(+)</text>
        <dbReference type="Rhea" id="RHEA:12068"/>
        <dbReference type="Rhea" id="RHEA-COMP:9685"/>
        <dbReference type="Rhea" id="RHEA-COMP:9690"/>
        <dbReference type="ChEBI" id="CHEBI:15378"/>
        <dbReference type="ChEBI" id="CHEBI:29999"/>
        <dbReference type="ChEBI" id="CHEBI:57287"/>
        <dbReference type="ChEBI" id="CHEBI:58343"/>
        <dbReference type="ChEBI" id="CHEBI:64479"/>
        <dbReference type="EC" id="2.7.8.7"/>
    </reaction>
</comment>
<comment type="cofactor">
    <cofactor evidence="1">
        <name>Mg(2+)</name>
        <dbReference type="ChEBI" id="CHEBI:18420"/>
    </cofactor>
</comment>
<comment type="subcellular location">
    <subcellularLocation>
        <location evidence="1">Cytoplasm</location>
    </subcellularLocation>
</comment>
<comment type="similarity">
    <text evidence="1">Belongs to the P-Pant transferase superfamily. AcpS family.</text>
</comment>
<organism>
    <name type="scientific">Clostridium perfringens (strain SM101 / Type A)</name>
    <dbReference type="NCBI Taxonomy" id="289380"/>
    <lineage>
        <taxon>Bacteria</taxon>
        <taxon>Bacillati</taxon>
        <taxon>Bacillota</taxon>
        <taxon>Clostridia</taxon>
        <taxon>Eubacteriales</taxon>
        <taxon>Clostridiaceae</taxon>
        <taxon>Clostridium</taxon>
    </lineage>
</organism>
<gene>
    <name evidence="1" type="primary">acpS</name>
    <name type="ordered locus">CPR_0282</name>
</gene>